<protein>
    <recommendedName>
        <fullName evidence="5">Mitochondrial inner membrane protease ATP23</fullName>
        <ecNumber evidence="1">3.4.24.-</ecNumber>
    </recommendedName>
</protein>
<gene>
    <name evidence="5" type="primary">ATP23</name>
    <name evidence="7" type="ordered locus">At3g03420</name>
    <name evidence="8" type="ORF">T21P5.16</name>
</gene>
<keyword id="KW-0378">Hydrolase</keyword>
<keyword id="KW-0472">Membrane</keyword>
<keyword id="KW-0479">Metal-binding</keyword>
<keyword id="KW-0482">Metalloprotease</keyword>
<keyword id="KW-0496">Mitochondrion</keyword>
<keyword id="KW-0999">Mitochondrion inner membrane</keyword>
<keyword id="KW-0645">Protease</keyword>
<keyword id="KW-1185">Reference proteome</keyword>
<sequence>MEDAAAPNSGSEFNPGARRGKSIDECQDMIRRSFRNPIVKFLMEQMEKSGCRVGDNFVKAVVCTGPVAGGYTKGRGITVCSNYLTIQDEVNQVVIHELIHAYDECRAKNLDWTNCAHHACSEIRAGHLSGDCHFKRELLRGFIKLRGHEQECIKRRVLKSLRGNPYCSEVAAKDAMEAVWDTCYNDTKPFDRAP</sequence>
<name>ATP23_ARATH</name>
<organism>
    <name type="scientific">Arabidopsis thaliana</name>
    <name type="common">Mouse-ear cress</name>
    <dbReference type="NCBI Taxonomy" id="3702"/>
    <lineage>
        <taxon>Eukaryota</taxon>
        <taxon>Viridiplantae</taxon>
        <taxon>Streptophyta</taxon>
        <taxon>Embryophyta</taxon>
        <taxon>Tracheophyta</taxon>
        <taxon>Spermatophyta</taxon>
        <taxon>Magnoliopsida</taxon>
        <taxon>eudicotyledons</taxon>
        <taxon>Gunneridae</taxon>
        <taxon>Pentapetalae</taxon>
        <taxon>rosids</taxon>
        <taxon>malvids</taxon>
        <taxon>Brassicales</taxon>
        <taxon>Brassicaceae</taxon>
        <taxon>Camelineae</taxon>
        <taxon>Arabidopsis</taxon>
    </lineage>
</organism>
<accession>Q9SRP6</accession>
<accession>A0A178VEZ6</accession>
<reference key="1">
    <citation type="journal article" date="2000" name="Nature">
        <title>Sequence and analysis of chromosome 3 of the plant Arabidopsis thaliana.</title>
        <authorList>
            <person name="Salanoubat M."/>
            <person name="Lemcke K."/>
            <person name="Rieger M."/>
            <person name="Ansorge W."/>
            <person name="Unseld M."/>
            <person name="Fartmann B."/>
            <person name="Valle G."/>
            <person name="Bloecker H."/>
            <person name="Perez-Alonso M."/>
            <person name="Obermaier B."/>
            <person name="Delseny M."/>
            <person name="Boutry M."/>
            <person name="Grivell L.A."/>
            <person name="Mache R."/>
            <person name="Puigdomenech P."/>
            <person name="De Simone V."/>
            <person name="Choisne N."/>
            <person name="Artiguenave F."/>
            <person name="Robert C."/>
            <person name="Brottier P."/>
            <person name="Wincker P."/>
            <person name="Cattolico L."/>
            <person name="Weissenbach J."/>
            <person name="Saurin W."/>
            <person name="Quetier F."/>
            <person name="Schaefer M."/>
            <person name="Mueller-Auer S."/>
            <person name="Gabel C."/>
            <person name="Fuchs M."/>
            <person name="Benes V."/>
            <person name="Wurmbach E."/>
            <person name="Drzonek H."/>
            <person name="Erfle H."/>
            <person name="Jordan N."/>
            <person name="Bangert S."/>
            <person name="Wiedelmann R."/>
            <person name="Kranz H."/>
            <person name="Voss H."/>
            <person name="Holland R."/>
            <person name="Brandt P."/>
            <person name="Nyakatura G."/>
            <person name="Vezzi A."/>
            <person name="D'Angelo M."/>
            <person name="Pallavicini A."/>
            <person name="Toppo S."/>
            <person name="Simionati B."/>
            <person name="Conrad A."/>
            <person name="Hornischer K."/>
            <person name="Kauer G."/>
            <person name="Loehnert T.-H."/>
            <person name="Nordsiek G."/>
            <person name="Reichelt J."/>
            <person name="Scharfe M."/>
            <person name="Schoen O."/>
            <person name="Bargues M."/>
            <person name="Terol J."/>
            <person name="Climent J."/>
            <person name="Navarro P."/>
            <person name="Collado C."/>
            <person name="Perez-Perez A."/>
            <person name="Ottenwaelder B."/>
            <person name="Duchemin D."/>
            <person name="Cooke R."/>
            <person name="Laudie M."/>
            <person name="Berger-Llauro C."/>
            <person name="Purnelle B."/>
            <person name="Masuy D."/>
            <person name="de Haan M."/>
            <person name="Maarse A.C."/>
            <person name="Alcaraz J.-P."/>
            <person name="Cottet A."/>
            <person name="Casacuberta E."/>
            <person name="Monfort A."/>
            <person name="Argiriou A."/>
            <person name="Flores M."/>
            <person name="Liguori R."/>
            <person name="Vitale D."/>
            <person name="Mannhaupt G."/>
            <person name="Haase D."/>
            <person name="Schoof H."/>
            <person name="Rudd S."/>
            <person name="Zaccaria P."/>
            <person name="Mewes H.-W."/>
            <person name="Mayer K.F.X."/>
            <person name="Kaul S."/>
            <person name="Town C.D."/>
            <person name="Koo H.L."/>
            <person name="Tallon L.J."/>
            <person name="Jenkins J."/>
            <person name="Rooney T."/>
            <person name="Rizzo M."/>
            <person name="Walts A."/>
            <person name="Utterback T."/>
            <person name="Fujii C.Y."/>
            <person name="Shea T.P."/>
            <person name="Creasy T.H."/>
            <person name="Haas B."/>
            <person name="Maiti R."/>
            <person name="Wu D."/>
            <person name="Peterson J."/>
            <person name="Van Aken S."/>
            <person name="Pai G."/>
            <person name="Militscher J."/>
            <person name="Sellers P."/>
            <person name="Gill J.E."/>
            <person name="Feldblyum T.V."/>
            <person name="Preuss D."/>
            <person name="Lin X."/>
            <person name="Nierman W.C."/>
            <person name="Salzberg S.L."/>
            <person name="White O."/>
            <person name="Venter J.C."/>
            <person name="Fraser C.M."/>
            <person name="Kaneko T."/>
            <person name="Nakamura Y."/>
            <person name="Sato S."/>
            <person name="Kato T."/>
            <person name="Asamizu E."/>
            <person name="Sasamoto S."/>
            <person name="Kimura T."/>
            <person name="Idesawa K."/>
            <person name="Kawashima K."/>
            <person name="Kishida Y."/>
            <person name="Kiyokawa C."/>
            <person name="Kohara M."/>
            <person name="Matsumoto M."/>
            <person name="Matsuno A."/>
            <person name="Muraki A."/>
            <person name="Nakayama S."/>
            <person name="Nakazaki N."/>
            <person name="Shinpo S."/>
            <person name="Takeuchi C."/>
            <person name="Wada T."/>
            <person name="Watanabe A."/>
            <person name="Yamada M."/>
            <person name="Yasuda M."/>
            <person name="Tabata S."/>
        </authorList>
    </citation>
    <scope>NUCLEOTIDE SEQUENCE [LARGE SCALE GENOMIC DNA]</scope>
    <source>
        <strain>cv. Columbia</strain>
    </source>
</reference>
<reference key="2">
    <citation type="journal article" date="2017" name="Plant J.">
        <title>Araport11: a complete reannotation of the Arabidopsis thaliana reference genome.</title>
        <authorList>
            <person name="Cheng C.Y."/>
            <person name="Krishnakumar V."/>
            <person name="Chan A.P."/>
            <person name="Thibaud-Nissen F."/>
            <person name="Schobel S."/>
            <person name="Town C.D."/>
        </authorList>
    </citation>
    <scope>GENOME REANNOTATION</scope>
    <source>
        <strain>cv. Columbia</strain>
    </source>
</reference>
<reference key="3">
    <citation type="journal article" date="2003" name="Science">
        <title>Empirical analysis of transcriptional activity in the Arabidopsis genome.</title>
        <authorList>
            <person name="Yamada K."/>
            <person name="Lim J."/>
            <person name="Dale J.M."/>
            <person name="Chen H."/>
            <person name="Shinn P."/>
            <person name="Palm C.J."/>
            <person name="Southwick A.M."/>
            <person name="Wu H.C."/>
            <person name="Kim C.J."/>
            <person name="Nguyen M."/>
            <person name="Pham P.K."/>
            <person name="Cheuk R.F."/>
            <person name="Karlin-Newmann G."/>
            <person name="Liu S.X."/>
            <person name="Lam B."/>
            <person name="Sakano H."/>
            <person name="Wu T."/>
            <person name="Yu G."/>
            <person name="Miranda M."/>
            <person name="Quach H.L."/>
            <person name="Tripp M."/>
            <person name="Chang C.H."/>
            <person name="Lee J.M."/>
            <person name="Toriumi M.J."/>
            <person name="Chan M.M."/>
            <person name="Tang C.C."/>
            <person name="Onodera C.S."/>
            <person name="Deng J.M."/>
            <person name="Akiyama K."/>
            <person name="Ansari Y."/>
            <person name="Arakawa T."/>
            <person name="Banh J."/>
            <person name="Banno F."/>
            <person name="Bowser L."/>
            <person name="Brooks S.Y."/>
            <person name="Carninci P."/>
            <person name="Chao Q."/>
            <person name="Choy N."/>
            <person name="Enju A."/>
            <person name="Goldsmith A.D."/>
            <person name="Gurjal M."/>
            <person name="Hansen N.F."/>
            <person name="Hayashizaki Y."/>
            <person name="Johnson-Hopson C."/>
            <person name="Hsuan V.W."/>
            <person name="Iida K."/>
            <person name="Karnes M."/>
            <person name="Khan S."/>
            <person name="Koesema E."/>
            <person name="Ishida J."/>
            <person name="Jiang P.X."/>
            <person name="Jones T."/>
            <person name="Kawai J."/>
            <person name="Kamiya A."/>
            <person name="Meyers C."/>
            <person name="Nakajima M."/>
            <person name="Narusaka M."/>
            <person name="Seki M."/>
            <person name="Sakurai T."/>
            <person name="Satou M."/>
            <person name="Tamse R."/>
            <person name="Vaysberg M."/>
            <person name="Wallender E.K."/>
            <person name="Wong C."/>
            <person name="Yamamura Y."/>
            <person name="Yuan S."/>
            <person name="Shinozaki K."/>
            <person name="Davis R.W."/>
            <person name="Theologis A."/>
            <person name="Ecker J.R."/>
        </authorList>
    </citation>
    <scope>NUCLEOTIDE SEQUENCE [LARGE SCALE MRNA]</scope>
    <source>
        <strain>cv. Columbia</strain>
    </source>
</reference>
<reference key="4">
    <citation type="journal article" date="2012" name="Mol. Cell. Proteomics">
        <title>Comparative large-scale characterisation of plant vs. mammal proteins reveals similar and idiosyncratic N-alpha acetylation features.</title>
        <authorList>
            <person name="Bienvenut W.V."/>
            <person name="Sumpton D."/>
            <person name="Martinez A."/>
            <person name="Lilla S."/>
            <person name="Espagne C."/>
            <person name="Meinnel T."/>
            <person name="Giglione C."/>
        </authorList>
    </citation>
    <scope>IDENTIFICATION BY MASS SPECTROMETRY [LARGE SCALE ANALYSIS]</scope>
</reference>
<reference key="5">
    <citation type="journal article" date="2012" name="Physiol. Plantarum">
        <title>Proteolytic system of plant mitochondria.</title>
        <authorList>
            <person name="Kwasniak M."/>
            <person name="Pogorzelec L."/>
            <person name="Migdal I."/>
            <person name="Smakowska E."/>
            <person name="Janska H."/>
        </authorList>
    </citation>
    <scope>IDENTIFICATION</scope>
    <scope>REVIEW OF MITOCHONDRIAL PROTEOLYTIC SYSTEM</scope>
</reference>
<reference key="6">
    <citation type="journal article" date="2017" name="Front. Plant Sci.">
        <title>AtOMA1 affects the OXPHOS system and plant growth in contrast to other newly identified ATP-independent proteases in Arabidopsis mitochondria.</title>
        <authorList>
            <person name="Migdal I."/>
            <person name="Skibior-Blaszczyk R."/>
            <person name="Heidorn-Czarna M."/>
            <person name="Kolodziejczak M."/>
            <person name="Garbiec A."/>
            <person name="Janska H."/>
        </authorList>
    </citation>
    <scope>DISRUPTION PHENOTYPE</scope>
    <scope>SUBCELLULAR LOCATION</scope>
    <source>
        <strain>cv. Columbia</strain>
    </source>
</reference>
<dbReference type="EC" id="3.4.24.-" evidence="1"/>
<dbReference type="EMBL" id="AC009895">
    <property type="protein sequence ID" value="AAF01592.1"/>
    <property type="molecule type" value="Genomic_DNA"/>
</dbReference>
<dbReference type="EMBL" id="CP002686">
    <property type="protein sequence ID" value="AEE73942.1"/>
    <property type="molecule type" value="Genomic_DNA"/>
</dbReference>
<dbReference type="EMBL" id="AF370230">
    <property type="protein sequence ID" value="AAK44045.1"/>
    <property type="molecule type" value="mRNA"/>
</dbReference>
<dbReference type="EMBL" id="AY059121">
    <property type="protein sequence ID" value="AAL15227.1"/>
    <property type="molecule type" value="mRNA"/>
</dbReference>
<dbReference type="RefSeq" id="NP_566205.1">
    <property type="nucleotide sequence ID" value="NM_111213.3"/>
</dbReference>
<dbReference type="FunCoup" id="Q9SRP6">
    <property type="interactions" value="3835"/>
</dbReference>
<dbReference type="STRING" id="3702.Q9SRP6"/>
<dbReference type="MEROPS" id="M76.002"/>
<dbReference type="PaxDb" id="3702-AT3G03420.1"/>
<dbReference type="ProteomicsDB" id="179162"/>
<dbReference type="EnsemblPlants" id="AT3G03420.1">
    <property type="protein sequence ID" value="AT3G03420.1"/>
    <property type="gene ID" value="AT3G03420"/>
</dbReference>
<dbReference type="GeneID" id="821258"/>
<dbReference type="Gramene" id="AT3G03420.1">
    <property type="protein sequence ID" value="AT3G03420.1"/>
    <property type="gene ID" value="AT3G03420"/>
</dbReference>
<dbReference type="KEGG" id="ath:AT3G03420"/>
<dbReference type="Araport" id="AT3G03420"/>
<dbReference type="TAIR" id="AT3G03420">
    <property type="gene designation" value="ATATP23"/>
</dbReference>
<dbReference type="eggNOG" id="KOG3314">
    <property type="taxonomic scope" value="Eukaryota"/>
</dbReference>
<dbReference type="HOGENOM" id="CLU_079125_3_0_1"/>
<dbReference type="InParanoid" id="Q9SRP6"/>
<dbReference type="OMA" id="EAHQNCV"/>
<dbReference type="OrthoDB" id="285308at2759"/>
<dbReference type="PRO" id="PR:Q9SRP6"/>
<dbReference type="Proteomes" id="UP000006548">
    <property type="component" value="Chromosome 3"/>
</dbReference>
<dbReference type="ExpressionAtlas" id="Q9SRP6">
    <property type="expression patterns" value="baseline and differential"/>
</dbReference>
<dbReference type="GO" id="GO:0005743">
    <property type="term" value="C:mitochondrial inner membrane"/>
    <property type="evidence" value="ECO:0007669"/>
    <property type="project" value="UniProtKB-SubCell"/>
</dbReference>
<dbReference type="GO" id="GO:0005739">
    <property type="term" value="C:mitochondrion"/>
    <property type="evidence" value="ECO:0000314"/>
    <property type="project" value="UniProtKB"/>
</dbReference>
<dbReference type="GO" id="GO:0046872">
    <property type="term" value="F:metal ion binding"/>
    <property type="evidence" value="ECO:0007669"/>
    <property type="project" value="UniProtKB-KW"/>
</dbReference>
<dbReference type="GO" id="GO:0004222">
    <property type="term" value="F:metalloendopeptidase activity"/>
    <property type="evidence" value="ECO:0007669"/>
    <property type="project" value="InterPro"/>
</dbReference>
<dbReference type="GO" id="GO:0006508">
    <property type="term" value="P:proteolysis"/>
    <property type="evidence" value="ECO:0007669"/>
    <property type="project" value="UniProtKB-KW"/>
</dbReference>
<dbReference type="InterPro" id="IPR019165">
    <property type="entry name" value="Peptidase_M76_ATP23"/>
</dbReference>
<dbReference type="PANTHER" id="PTHR21711">
    <property type="entry name" value="MITOCHONDRIAL INNER MEMBRANE PROTEASE"/>
    <property type="match status" value="1"/>
</dbReference>
<dbReference type="PANTHER" id="PTHR21711:SF0">
    <property type="entry name" value="MITOCHONDRIAL INNER MEMBRANE PROTEASE ATP23 HOMOLOG"/>
    <property type="match status" value="1"/>
</dbReference>
<dbReference type="Pfam" id="PF09768">
    <property type="entry name" value="Peptidase_M76"/>
    <property type="match status" value="1"/>
</dbReference>
<dbReference type="PROSITE" id="PS00142">
    <property type="entry name" value="ZINC_PROTEASE"/>
    <property type="match status" value="1"/>
</dbReference>
<proteinExistence type="evidence at protein level"/>
<evidence type="ECO:0000250" key="1">
    <source>
        <dbReference type="UniProtKB" id="P53722"/>
    </source>
</evidence>
<evidence type="ECO:0000255" key="2">
    <source>
        <dbReference type="PROSITE-ProRule" id="PRU10095"/>
    </source>
</evidence>
<evidence type="ECO:0000256" key="3">
    <source>
        <dbReference type="SAM" id="MobiDB-lite"/>
    </source>
</evidence>
<evidence type="ECO:0000269" key="4">
    <source>
    </source>
</evidence>
<evidence type="ECO:0000303" key="5">
    <source>
    </source>
</evidence>
<evidence type="ECO:0000305" key="6"/>
<evidence type="ECO:0000312" key="7">
    <source>
        <dbReference type="Araport" id="AT3G03420"/>
    </source>
</evidence>
<evidence type="ECO:0000312" key="8">
    <source>
        <dbReference type="EMBL" id="AAF01592.1"/>
    </source>
</evidence>
<feature type="chain" id="PRO_0000457992" description="Mitochondrial inner membrane protease ATP23">
    <location>
        <begin position="1"/>
        <end position="194"/>
    </location>
</feature>
<feature type="region of interest" description="Disordered" evidence="3">
    <location>
        <begin position="1"/>
        <end position="20"/>
    </location>
</feature>
<feature type="active site" evidence="2">
    <location>
        <position position="97"/>
    </location>
</feature>
<feature type="binding site" evidence="2">
    <location>
        <position position="96"/>
    </location>
    <ligand>
        <name>Zn(2+)</name>
        <dbReference type="ChEBI" id="CHEBI:29105"/>
        <note>catalytic</note>
    </ligand>
</feature>
<feature type="binding site" evidence="2">
    <location>
        <position position="100"/>
    </location>
    <ligand>
        <name>Zn(2+)</name>
        <dbReference type="ChEBI" id="CHEBI:29105"/>
        <note>catalytic</note>
    </ligand>
</feature>
<comment type="function">
    <text evidence="1">Has a dual role in the assembly of mitochondrial ATPase (By similarity). Acts as a protease that removes the N-terminal 10 residues of mitochondrial ATPase CF(0) subunit 6 (ATP6) at the intermembrane space side (By similarity). Also involved in the correct assembly of the membrane-embedded ATPase CF(0) particle, probably mediating association of ATP6 with the subunit 9 ring (By similarity).</text>
</comment>
<comment type="subcellular location">
    <subcellularLocation>
        <location evidence="4">Mitochondrion inner membrane</location>
        <topology evidence="1">Peripheral membrane protein</topology>
        <orientation evidence="1">Intermembrane side</orientation>
    </subcellularLocation>
    <text evidence="1">Associates loosely with the inner membrane.</text>
</comment>
<comment type="disruption phenotype">
    <text evidence="4">No visible phenotype.</text>
</comment>
<comment type="similarity">
    <text evidence="6">Belongs to the peptidase M76 family.</text>
</comment>